<protein>
    <recommendedName>
        <fullName evidence="1">UPF0102 protein PSPPH_4120</fullName>
    </recommendedName>
</protein>
<reference key="1">
    <citation type="journal article" date="2005" name="J. Bacteriol.">
        <title>Whole-genome sequence analysis of Pseudomonas syringae pv. phaseolicola 1448A reveals divergence among pathovars in genes involved in virulence and transposition.</title>
        <authorList>
            <person name="Joardar V."/>
            <person name="Lindeberg M."/>
            <person name="Jackson R.W."/>
            <person name="Selengut J."/>
            <person name="Dodson R."/>
            <person name="Brinkac L.M."/>
            <person name="Daugherty S.C."/>
            <person name="DeBoy R.T."/>
            <person name="Durkin A.S."/>
            <person name="Gwinn Giglio M."/>
            <person name="Madupu R."/>
            <person name="Nelson W.C."/>
            <person name="Rosovitz M.J."/>
            <person name="Sullivan S.A."/>
            <person name="Crabtree J."/>
            <person name="Creasy T."/>
            <person name="Davidsen T.M."/>
            <person name="Haft D.H."/>
            <person name="Zafar N."/>
            <person name="Zhou L."/>
            <person name="Halpin R."/>
            <person name="Holley T."/>
            <person name="Khouri H.M."/>
            <person name="Feldblyum T.V."/>
            <person name="White O."/>
            <person name="Fraser C.M."/>
            <person name="Chatterjee A.K."/>
            <person name="Cartinhour S."/>
            <person name="Schneider D."/>
            <person name="Mansfield J.W."/>
            <person name="Collmer A."/>
            <person name="Buell R."/>
        </authorList>
    </citation>
    <scope>NUCLEOTIDE SEQUENCE [LARGE SCALE GENOMIC DNA]</scope>
    <source>
        <strain>1448A / Race 6</strain>
    </source>
</reference>
<evidence type="ECO:0000255" key="1">
    <source>
        <dbReference type="HAMAP-Rule" id="MF_00048"/>
    </source>
</evidence>
<gene>
    <name type="ordered locus">PSPPH_4120</name>
</gene>
<accession>Q48EE6</accession>
<feature type="chain" id="PRO_0000336236" description="UPF0102 protein PSPPH_4120">
    <location>
        <begin position="1"/>
        <end position="123"/>
    </location>
</feature>
<dbReference type="EMBL" id="CP000058">
    <property type="protein sequence ID" value="AAZ36252.1"/>
    <property type="molecule type" value="Genomic_DNA"/>
</dbReference>
<dbReference type="RefSeq" id="WP_004656540.1">
    <property type="nucleotide sequence ID" value="NC_005773.3"/>
</dbReference>
<dbReference type="SMR" id="Q48EE6"/>
<dbReference type="KEGG" id="psp:PSPPH_4120"/>
<dbReference type="eggNOG" id="COG0792">
    <property type="taxonomic scope" value="Bacteria"/>
</dbReference>
<dbReference type="HOGENOM" id="CLU_115353_1_0_6"/>
<dbReference type="Proteomes" id="UP000000551">
    <property type="component" value="Chromosome"/>
</dbReference>
<dbReference type="GO" id="GO:0003676">
    <property type="term" value="F:nucleic acid binding"/>
    <property type="evidence" value="ECO:0007669"/>
    <property type="project" value="InterPro"/>
</dbReference>
<dbReference type="CDD" id="cd20736">
    <property type="entry name" value="PoNe_Nuclease"/>
    <property type="match status" value="1"/>
</dbReference>
<dbReference type="Gene3D" id="3.40.1350.10">
    <property type="match status" value="1"/>
</dbReference>
<dbReference type="HAMAP" id="MF_00048">
    <property type="entry name" value="UPF0102"/>
    <property type="match status" value="1"/>
</dbReference>
<dbReference type="InterPro" id="IPR011335">
    <property type="entry name" value="Restrct_endonuc-II-like"/>
</dbReference>
<dbReference type="InterPro" id="IPR011856">
    <property type="entry name" value="tRNA_endonuc-like_dom_sf"/>
</dbReference>
<dbReference type="InterPro" id="IPR003509">
    <property type="entry name" value="UPF0102_YraN-like"/>
</dbReference>
<dbReference type="NCBIfam" id="NF009150">
    <property type="entry name" value="PRK12497.1-3"/>
    <property type="match status" value="1"/>
</dbReference>
<dbReference type="NCBIfam" id="TIGR00252">
    <property type="entry name" value="YraN family protein"/>
    <property type="match status" value="1"/>
</dbReference>
<dbReference type="PANTHER" id="PTHR34039">
    <property type="entry name" value="UPF0102 PROTEIN YRAN"/>
    <property type="match status" value="1"/>
</dbReference>
<dbReference type="PANTHER" id="PTHR34039:SF1">
    <property type="entry name" value="UPF0102 PROTEIN YRAN"/>
    <property type="match status" value="1"/>
</dbReference>
<dbReference type="Pfam" id="PF02021">
    <property type="entry name" value="UPF0102"/>
    <property type="match status" value="1"/>
</dbReference>
<dbReference type="SUPFAM" id="SSF52980">
    <property type="entry name" value="Restriction endonuclease-like"/>
    <property type="match status" value="1"/>
</dbReference>
<proteinExistence type="inferred from homology"/>
<sequence>MPRSSRQQAGREAEAFALQFLQRQGLHLIEQNWLCKRGELDLVMLDGDTVVFVEVRYRRHSGWGGATESVDFRKQAKLVTAAQLFLQQATDWASHPCRFDVIAIEGQPGNAAPLNWIKSAFDS</sequence>
<comment type="similarity">
    <text evidence="1">Belongs to the UPF0102 family.</text>
</comment>
<organism>
    <name type="scientific">Pseudomonas savastanoi pv. phaseolicola (strain 1448A / Race 6)</name>
    <name type="common">Pseudomonas syringae pv. phaseolicola (strain 1448A / Race 6)</name>
    <dbReference type="NCBI Taxonomy" id="264730"/>
    <lineage>
        <taxon>Bacteria</taxon>
        <taxon>Pseudomonadati</taxon>
        <taxon>Pseudomonadota</taxon>
        <taxon>Gammaproteobacteria</taxon>
        <taxon>Pseudomonadales</taxon>
        <taxon>Pseudomonadaceae</taxon>
        <taxon>Pseudomonas</taxon>
    </lineage>
</organism>
<name>Y4120_PSE14</name>